<evidence type="ECO:0000250" key="1"/>
<evidence type="ECO:0000255" key="2">
    <source>
        <dbReference type="PROSITE-ProRule" id="PRU00448"/>
    </source>
</evidence>
<evidence type="ECO:0000256" key="3">
    <source>
        <dbReference type="SAM" id="MobiDB-lite"/>
    </source>
</evidence>
<evidence type="ECO:0000269" key="4">
    <source>
    </source>
</evidence>
<evidence type="ECO:0000269" key="5">
    <source>
    </source>
</evidence>
<evidence type="ECO:0000269" key="6">
    <source>
    </source>
</evidence>
<evidence type="ECO:0000269" key="7">
    <source>
    </source>
</evidence>
<evidence type="ECO:0000269" key="8">
    <source>
    </source>
</evidence>
<evidence type="ECO:0000303" key="9">
    <source>
    </source>
</evidence>
<evidence type="ECO:0000305" key="10"/>
<organism>
    <name type="scientific">Homo sapiens</name>
    <name type="common">Human</name>
    <dbReference type="NCBI Taxonomy" id="9606"/>
    <lineage>
        <taxon>Eukaryota</taxon>
        <taxon>Metazoa</taxon>
        <taxon>Chordata</taxon>
        <taxon>Craniata</taxon>
        <taxon>Vertebrata</taxon>
        <taxon>Euteleostomi</taxon>
        <taxon>Mammalia</taxon>
        <taxon>Eutheria</taxon>
        <taxon>Euarchontoglires</taxon>
        <taxon>Primates</taxon>
        <taxon>Haplorrhini</taxon>
        <taxon>Catarrhini</taxon>
        <taxon>Hominidae</taxon>
        <taxon>Homo</taxon>
    </lineage>
</organism>
<comment type="function">
    <text evidence="1 5 7">Cell autonomous antagonist of the canonical Wnt signaling pathway. May activate a second Wnt signaling pathway that controls planar cell polarity (By similarity). Required for processing of TGFA and for targeting of TGFA to the basolateral membrane of polarized epithelial cells.</text>
</comment>
<comment type="subunit">
    <text evidence="1 5 8">Interacts with DVL1, DVL2, DVL3 and PPP2R3A (By similarity). Interacts with RNF25 and TGFA (via cytoplasmic domain).</text>
</comment>
<comment type="interaction">
    <interactant intactId="EBI-1538629">
        <id>Q969F2</id>
    </interactant>
    <interactant intactId="EBI-947779">
        <id>Q96PM5</id>
        <label>RCHY1</label>
    </interactant>
    <organismsDiffer>false</organismsDiffer>
    <experiments>2</experiments>
</comment>
<comment type="interaction">
    <interactant intactId="EBI-1538629">
        <id>Q969F2</id>
    </interactant>
    <interactant intactId="EBI-2129220">
        <id>Q96BH1</id>
        <label>RNF25</label>
    </interactant>
    <organismsDiffer>false</organismsDiffer>
    <experiments>2</experiments>
</comment>
<comment type="interaction">
    <interactant intactId="EBI-1538629">
        <id>Q969F2</id>
    </interactant>
    <interactant intactId="EBI-1034374">
        <id>P01135</id>
        <label>TGFA</label>
    </interactant>
    <organismsDiffer>false</organismsDiffer>
    <experiments>3</experiments>
</comment>
<comment type="subcellular location">
    <subcellularLocation>
        <location evidence="5 7">Cell membrane</location>
    </subcellularLocation>
    <subcellularLocation>
        <location evidence="5 7">Cytoplasm</location>
    </subcellularLocation>
    <subcellularLocation>
        <location evidence="5 7">Cytoplasmic vesicle</location>
    </subcellularLocation>
</comment>
<comment type="alternative products">
    <event type="alternative splicing"/>
    <isoform>
        <id>Q969F2-1</id>
        <name>1</name>
        <sequence type="displayed"/>
    </isoform>
    <isoform>
        <id>Q969F2-2</id>
        <name>2</name>
        <sequence type="described" ref="VSP_027900 VSP_027901"/>
    </isoform>
</comment>
<comment type="tissue specificity">
    <text evidence="4">Expressed in kidney, lung, pancreas and spleen.</text>
</comment>
<comment type="developmental stage">
    <text evidence="4">Expressed in fetal kidney and lung.</text>
</comment>
<comment type="domain">
    <text evidence="6">The N-terminal domain comprising the first 217 amino acid residues is mostly unstructured.</text>
</comment>
<comment type="PTM">
    <text evidence="8">Ubiquitinated, leading to rapid proteasomal degradation. Interaction with TGFA interferes with RNF25 binding and protects against ubiquitination mediated by RNF25.</text>
</comment>
<comment type="similarity">
    <text evidence="10">Belongs to the NKD family.</text>
</comment>
<feature type="initiator methionine" description="Removed" evidence="5">
    <location>
        <position position="1"/>
    </location>
</feature>
<feature type="chain" id="PRO_0000301993" description="Protein naked cuticle homolog 2">
    <location>
        <begin position="2"/>
        <end position="451"/>
    </location>
</feature>
<feature type="domain" description="EF-hand" evidence="2">
    <location>
        <begin position="119"/>
        <end position="154"/>
    </location>
</feature>
<feature type="region of interest" description="Disordered" evidence="3">
    <location>
        <begin position="1"/>
        <end position="108"/>
    </location>
</feature>
<feature type="region of interest" description="Targeting to the basolateral cell membrane">
    <location>
        <begin position="2"/>
        <end position="173"/>
    </location>
</feature>
<feature type="region of interest" description="Interaction with DVL1, DVL2 and DVL3" evidence="1">
    <location>
        <begin position="113"/>
        <end position="178"/>
    </location>
</feature>
<feature type="region of interest" description="Disordered" evidence="3">
    <location>
        <begin position="162"/>
        <end position="237"/>
    </location>
</feature>
<feature type="region of interest" description="Disordered" evidence="3">
    <location>
        <begin position="256"/>
        <end position="408"/>
    </location>
</feature>
<feature type="region of interest" description="Interaction with TGFA">
    <location>
        <begin position="300"/>
        <end position="385"/>
    </location>
</feature>
<feature type="compositionally biased region" description="Basic and acidic residues" evidence="3">
    <location>
        <begin position="34"/>
        <end position="63"/>
    </location>
</feature>
<feature type="compositionally biased region" description="Basic and acidic residues" evidence="3">
    <location>
        <begin position="89"/>
        <end position="99"/>
    </location>
</feature>
<feature type="compositionally biased region" description="Basic and acidic residues" evidence="3">
    <location>
        <begin position="180"/>
        <end position="215"/>
    </location>
</feature>
<feature type="compositionally biased region" description="Low complexity" evidence="3">
    <location>
        <begin position="332"/>
        <end position="351"/>
    </location>
</feature>
<feature type="binding site" evidence="10">
    <location>
        <position position="132"/>
    </location>
    <ligand>
        <name>Ca(2+)</name>
        <dbReference type="ChEBI" id="CHEBI:29108"/>
    </ligand>
</feature>
<feature type="binding site" evidence="10">
    <location>
        <position position="134"/>
    </location>
    <ligand>
        <name>Ca(2+)</name>
        <dbReference type="ChEBI" id="CHEBI:29108"/>
    </ligand>
</feature>
<feature type="binding site" evidence="10">
    <location>
        <position position="138"/>
    </location>
    <ligand>
        <name>Ca(2+)</name>
        <dbReference type="ChEBI" id="CHEBI:29108"/>
    </ligand>
</feature>
<feature type="binding site" evidence="10">
    <location>
        <position position="143"/>
    </location>
    <ligand>
        <name>Ca(2+)</name>
        <dbReference type="ChEBI" id="CHEBI:29108"/>
    </ligand>
</feature>
<feature type="lipid moiety-binding region" description="N-myristoyl glycine" evidence="5">
    <location>
        <position position="2"/>
    </location>
</feature>
<feature type="splice variant" id="VSP_027900" description="In isoform 2." evidence="9">
    <original>PPVQAKQEPQGRASHLQARSRSQEPDTHAVHHRRSQVLVEHVVPASE</original>
    <variation>QLCEKRSSAPRTHSGDKARGVGLCRELWSQAGHPQWPGPFPSGLVAV</variation>
    <location>
        <begin position="265"/>
        <end position="311"/>
    </location>
</feature>
<feature type="splice variant" id="VSP_027901" description="In isoform 2." evidence="9">
    <location>
        <begin position="312"/>
        <end position="451"/>
    </location>
</feature>
<feature type="sequence variant" id="VAR_034934" description="In dbSNP:rs35679233.">
    <original>T</original>
    <variation>K</variation>
    <location>
        <position position="257"/>
    </location>
</feature>
<feature type="mutagenesis site" description="Abrogates myristoylation and membrane association and impairs delivery of TGFA to the cell surface." evidence="5">
    <original>G</original>
    <variation>A</variation>
    <location>
        <position position="2"/>
    </location>
</feature>
<sequence>MGKLQSKHAAAARKRRESPEGDSFVASAYASGRKGAEEAERRARDKQELPNGDPKEGPFREDQCPLQVALPAEKAEGREHPGQLLSADDGERAANREGPRGPGGQRLNIDALQCDVSVEEDDRQEWTFTLYDFDNCGKVTREDMSSLMHTIYEVVDASVNHSSGSSKTLRVKLTVSPEPSSKRKEGPPAGQDREPTRCRMEGELAEEPRVADRRLSAHVRRPSTDPQPCSERGPYCVDENTERRNHYLDLAGIENYTSRFGPGSPPVQAKQEPQGRASHLQARSRSQEPDTHAVHHRRSQVLVEHVVPASEPAARALDTQPRPKGPEKQFLKSPKGSGKPPGVPASSKSGKAFSYYLPAVLPPQAPQDGHHLPQPPPPPYGHKRYRQKGREGHSPLKAPHAQPATVEHEVVRDLPPTPAGEGYAVPVIQRHEHHHHHEHHHHHHHHHFHPS</sequence>
<gene>
    <name type="primary">NKD2</name>
</gene>
<protein>
    <recommendedName>
        <fullName>Protein naked cuticle homolog 2</fullName>
        <shortName>Naked-2</shortName>
        <shortName>hNkd2</shortName>
    </recommendedName>
</protein>
<reference key="1">
    <citation type="journal article" date="2001" name="Dev. Biol.">
        <title>Vertebrate proteins related to Drosophila Naked Cuticle bind Dishevelled and antagonize Wnt signaling.</title>
        <authorList>
            <person name="Wharton K.A. Jr."/>
            <person name="Zimmermann G."/>
            <person name="Rousset R."/>
            <person name="Scott M.P."/>
        </authorList>
    </citation>
    <scope>NUCLEOTIDE SEQUENCE [MRNA] (ISOFORM 1)</scope>
</reference>
<reference key="2">
    <citation type="journal article" date="2001" name="Int. J. Oncol.">
        <title>Molecular cloning, gene structure, and expression analyses of NKD1 and NKD2.</title>
        <authorList>
            <person name="Katoh M."/>
        </authorList>
    </citation>
    <scope>NUCLEOTIDE SEQUENCE [MRNA] (ISOFORM 1)</scope>
    <scope>TISSUE SPECIFICITY</scope>
    <scope>DEVELOPMENTAL STAGE</scope>
    <source>
        <tissue>Fetus</tissue>
    </source>
</reference>
<reference key="3">
    <citation type="journal article" date="2004" name="Genome Res.">
        <title>The status, quality, and expansion of the NIH full-length cDNA project: the Mammalian Gene Collection (MGC).</title>
        <authorList>
            <consortium name="The MGC Project Team"/>
        </authorList>
    </citation>
    <scope>NUCLEOTIDE SEQUENCE [LARGE SCALE MRNA] (ISOFORM 2)</scope>
    <scope>NUCLEOTIDE SEQUENCE [LARGE SCALE MRNA] OF 127-451 (ISOFORM 1)</scope>
    <source>
        <tissue>Placenta</tissue>
        <tissue>Uterus</tissue>
    </source>
</reference>
<reference key="4">
    <citation type="journal article" date="2004" name="Proc. Natl. Acad. Sci. U.S.A.">
        <title>Myristoylated Naked2 escorts transforming growth factor alpha to the basolateral plasma membrane of polarized epithelial cells.</title>
        <authorList>
            <person name="Li C."/>
            <person name="Franklin J.L."/>
            <person name="Graves-Deal R."/>
            <person name="Jerome W.G."/>
            <person name="Cao Z."/>
            <person name="Coffey R.J."/>
        </authorList>
    </citation>
    <scope>FUNCTION</scope>
    <scope>INTERACTION WITH TGFA</scope>
    <scope>SUBCELLULAR LOCATION</scope>
    <scope>MYRISTOYLATION AT GLY-2</scope>
    <scope>MUTAGENESIS OF GLY-2</scope>
</reference>
<reference key="5">
    <citation type="journal article" date="2006" name="Biochem. Biophys. Res. Commun.">
        <title>Structural studies of human Naked2: a biologically active intrinsically unstructured protein.</title>
        <authorList>
            <person name="Hu T."/>
            <person name="Krezel A.M."/>
            <person name="Li C."/>
            <person name="Coffey R.J."/>
        </authorList>
    </citation>
    <scope>DOMAIN</scope>
    <scope>STRUCTURE BY NMR</scope>
    <scope>CIRCULAR DICHROISM</scope>
</reference>
<reference key="6">
    <citation type="journal article" date="2007" name="Mol. Biol. Cell">
        <title>Naked2 acts as a cargo recognition and targeting protein to ensure proper delivery and fusion of TGF-{alpha} containing exocytic vesicles at the lower lateral membrane of polarized MDCK cells.</title>
        <authorList>
            <person name="Li C."/>
            <person name="Hao M."/>
            <person name="Cao Z."/>
            <person name="Ding W."/>
            <person name="Graves-Deal R."/>
            <person name="Hu J."/>
            <person name="Piston D.W."/>
            <person name="Coffey R.J."/>
        </authorList>
    </citation>
    <scope>FUNCTION</scope>
    <scope>SUBCELLULAR LOCATION</scope>
</reference>
<reference key="7">
    <citation type="journal article" date="2008" name="Proc. Natl. Acad. Sci. U.S.A.">
        <title>EGF receptor-independent action of TGF-alpha protects Naked2 from AO7-mediated ubiquitylation and proteasomal degradation.</title>
        <authorList>
            <person name="Ding W."/>
            <person name="Li C."/>
            <person name="Hu T."/>
            <person name="Graves-Deal R."/>
            <person name="Fotia A.B."/>
            <person name="Weissman A.M."/>
            <person name="Coffey R.J."/>
        </authorList>
    </citation>
    <scope>UBIQUITINATION</scope>
    <scope>INTERACTION WITH TGFA AND RNF25</scope>
</reference>
<dbReference type="EMBL" id="AF358137">
    <property type="protein sequence ID" value="AAK57486.1"/>
    <property type="molecule type" value="mRNA"/>
</dbReference>
<dbReference type="EMBL" id="AB062887">
    <property type="protein sequence ID" value="BAB70501.1"/>
    <property type="molecule type" value="mRNA"/>
</dbReference>
<dbReference type="EMBL" id="BC004940">
    <property type="protein sequence ID" value="AAH04940.1"/>
    <property type="molecule type" value="mRNA"/>
</dbReference>
<dbReference type="EMBL" id="BC012176">
    <property type="protein sequence ID" value="AAH12176.1"/>
    <property type="molecule type" value="mRNA"/>
</dbReference>
<dbReference type="CCDS" id="CCDS3859.1">
    <molecule id="Q969F2-1"/>
</dbReference>
<dbReference type="CCDS" id="CCDS59486.1">
    <molecule id="Q969F2-2"/>
</dbReference>
<dbReference type="RefSeq" id="NP_001258011.1">
    <molecule id="Q969F2-2"/>
    <property type="nucleotide sequence ID" value="NM_001271082.2"/>
</dbReference>
<dbReference type="RefSeq" id="NP_149111.1">
    <molecule id="Q969F2-1"/>
    <property type="nucleotide sequence ID" value="NM_033120.4"/>
</dbReference>
<dbReference type="BioGRID" id="124517">
    <property type="interactions" value="40"/>
</dbReference>
<dbReference type="DIP" id="DIP-38642N"/>
<dbReference type="FunCoup" id="Q969F2">
    <property type="interactions" value="385"/>
</dbReference>
<dbReference type="IntAct" id="Q969F2">
    <property type="interactions" value="27"/>
</dbReference>
<dbReference type="MINT" id="Q969F2"/>
<dbReference type="STRING" id="9606.ENSP00000296849"/>
<dbReference type="GlyGen" id="Q969F2">
    <property type="glycosylation" value="1 site"/>
</dbReference>
<dbReference type="iPTMnet" id="Q969F2"/>
<dbReference type="PhosphoSitePlus" id="Q969F2"/>
<dbReference type="BioMuta" id="NKD2"/>
<dbReference type="DMDM" id="74716653"/>
<dbReference type="jPOST" id="Q969F2"/>
<dbReference type="MassIVE" id="Q969F2"/>
<dbReference type="PaxDb" id="9606-ENSP00000296849"/>
<dbReference type="PeptideAtlas" id="Q969F2"/>
<dbReference type="ProteomicsDB" id="75748">
    <molecule id="Q969F2-1"/>
</dbReference>
<dbReference type="ProteomicsDB" id="75749">
    <molecule id="Q969F2-2"/>
</dbReference>
<dbReference type="Antibodypedia" id="22295">
    <property type="antibodies" value="154 antibodies from 28 providers"/>
</dbReference>
<dbReference type="DNASU" id="85409"/>
<dbReference type="Ensembl" id="ENST00000274150.4">
    <molecule id="Q969F2-2"/>
    <property type="protein sequence ID" value="ENSP00000274150.4"/>
    <property type="gene ID" value="ENSG00000145506.14"/>
</dbReference>
<dbReference type="Ensembl" id="ENST00000296849.10">
    <molecule id="Q969F2-1"/>
    <property type="protein sequence ID" value="ENSP00000296849.5"/>
    <property type="gene ID" value="ENSG00000145506.14"/>
</dbReference>
<dbReference type="Ensembl" id="ENST00000610777.2">
    <molecule id="Q969F2-2"/>
    <property type="protein sequence ID" value="ENSP00000482896.1"/>
    <property type="gene ID" value="ENSG00000276920.4"/>
</dbReference>
<dbReference type="Ensembl" id="ENST00000616539.4">
    <molecule id="Q969F2-1"/>
    <property type="protein sequence ID" value="ENSP00000479003.1"/>
    <property type="gene ID" value="ENSG00000276920.4"/>
</dbReference>
<dbReference type="GeneID" id="85409"/>
<dbReference type="KEGG" id="hsa:85409"/>
<dbReference type="MANE-Select" id="ENST00000296849.10">
    <property type="protein sequence ID" value="ENSP00000296849.5"/>
    <property type="RefSeq nucleotide sequence ID" value="NM_033120.4"/>
    <property type="RefSeq protein sequence ID" value="NP_149111.1"/>
</dbReference>
<dbReference type="UCSC" id="uc003jbt.3">
    <molecule id="Q969F2-1"/>
    <property type="organism name" value="human"/>
</dbReference>
<dbReference type="AGR" id="HGNC:17046"/>
<dbReference type="CTD" id="85409"/>
<dbReference type="DisGeNET" id="85409"/>
<dbReference type="GeneCards" id="NKD2"/>
<dbReference type="HGNC" id="HGNC:17046">
    <property type="gene designation" value="NKD2"/>
</dbReference>
<dbReference type="HPA" id="ENSG00000145506">
    <property type="expression patterns" value="Tissue enhanced (lung)"/>
</dbReference>
<dbReference type="MIM" id="607852">
    <property type="type" value="gene"/>
</dbReference>
<dbReference type="neXtProt" id="NX_Q969F2"/>
<dbReference type="OpenTargets" id="ENSG00000145506"/>
<dbReference type="PharmGKB" id="PA31638"/>
<dbReference type="VEuPathDB" id="HostDB:ENSG00000145506"/>
<dbReference type="eggNOG" id="ENOG502QWMF">
    <property type="taxonomic scope" value="Eukaryota"/>
</dbReference>
<dbReference type="GeneTree" id="ENSGT00440000033589"/>
<dbReference type="HOGENOM" id="CLU_035610_1_0_1"/>
<dbReference type="InParanoid" id="Q969F2"/>
<dbReference type="OMA" id="RQEHHGK"/>
<dbReference type="OrthoDB" id="5953812at2759"/>
<dbReference type="PAN-GO" id="Q969F2">
    <property type="GO annotations" value="2 GO annotations based on evolutionary models"/>
</dbReference>
<dbReference type="PhylomeDB" id="Q969F2"/>
<dbReference type="TreeFam" id="TF328786"/>
<dbReference type="PathwayCommons" id="Q969F2"/>
<dbReference type="SignaLink" id="Q969F2"/>
<dbReference type="SIGNOR" id="Q969F2"/>
<dbReference type="BioGRID-ORCS" id="85409">
    <property type="hits" value="17 hits in 1146 CRISPR screens"/>
</dbReference>
<dbReference type="GenomeRNAi" id="85409"/>
<dbReference type="Pharos" id="Q969F2">
    <property type="development level" value="Tbio"/>
</dbReference>
<dbReference type="PRO" id="PR:Q969F2"/>
<dbReference type="Proteomes" id="UP000005640">
    <property type="component" value="Chromosome 5"/>
</dbReference>
<dbReference type="RNAct" id="Q969F2">
    <property type="molecule type" value="protein"/>
</dbReference>
<dbReference type="Bgee" id="ENSG00000145506">
    <property type="expression patterns" value="Expressed in upper lobe of left lung and 92 other cell types or tissues"/>
</dbReference>
<dbReference type="GO" id="GO:0016323">
    <property type="term" value="C:basolateral plasma membrane"/>
    <property type="evidence" value="ECO:0000314"/>
    <property type="project" value="BHF-UCL"/>
</dbReference>
<dbReference type="GO" id="GO:0071944">
    <property type="term" value="C:cell periphery"/>
    <property type="evidence" value="ECO:0000314"/>
    <property type="project" value="BHF-UCL"/>
</dbReference>
<dbReference type="GO" id="GO:0005737">
    <property type="term" value="C:cytoplasm"/>
    <property type="evidence" value="ECO:0000318"/>
    <property type="project" value="GO_Central"/>
</dbReference>
<dbReference type="GO" id="GO:0031410">
    <property type="term" value="C:cytoplasmic vesicle"/>
    <property type="evidence" value="ECO:0000314"/>
    <property type="project" value="BHF-UCL"/>
</dbReference>
<dbReference type="GO" id="GO:0070382">
    <property type="term" value="C:exocytic vesicle"/>
    <property type="evidence" value="ECO:0000314"/>
    <property type="project" value="CAFA"/>
</dbReference>
<dbReference type="GO" id="GO:0016328">
    <property type="term" value="C:lateral plasma membrane"/>
    <property type="evidence" value="ECO:0000314"/>
    <property type="project" value="BHF-UCL"/>
</dbReference>
<dbReference type="GO" id="GO:0005886">
    <property type="term" value="C:plasma membrane"/>
    <property type="evidence" value="ECO:0000314"/>
    <property type="project" value="CAFA"/>
</dbReference>
<dbReference type="GO" id="GO:0051117">
    <property type="term" value="F:ATPase binding"/>
    <property type="evidence" value="ECO:0000353"/>
    <property type="project" value="CAFA"/>
</dbReference>
<dbReference type="GO" id="GO:0005509">
    <property type="term" value="F:calcium ion binding"/>
    <property type="evidence" value="ECO:0007669"/>
    <property type="project" value="InterPro"/>
</dbReference>
<dbReference type="GO" id="GO:0019838">
    <property type="term" value="F:growth factor binding"/>
    <property type="evidence" value="ECO:0000353"/>
    <property type="project" value="BHF-UCL"/>
</dbReference>
<dbReference type="GO" id="GO:0060090">
    <property type="term" value="F:molecular adaptor activity"/>
    <property type="evidence" value="ECO:0000269"/>
    <property type="project" value="DisProt"/>
</dbReference>
<dbReference type="GO" id="GO:0032036">
    <property type="term" value="F:myosin heavy chain binding"/>
    <property type="evidence" value="ECO:0000353"/>
    <property type="project" value="CAFA"/>
</dbReference>
<dbReference type="GO" id="GO:0031625">
    <property type="term" value="F:ubiquitin protein ligase binding"/>
    <property type="evidence" value="ECO:0000353"/>
    <property type="project" value="UniProtKB"/>
</dbReference>
<dbReference type="GO" id="GO:0006887">
    <property type="term" value="P:exocytosis"/>
    <property type="evidence" value="ECO:0007669"/>
    <property type="project" value="UniProtKB-KW"/>
</dbReference>
<dbReference type="GO" id="GO:0048210">
    <property type="term" value="P:Golgi vesicle fusion to target membrane"/>
    <property type="evidence" value="ECO:0000315"/>
    <property type="project" value="BHF-UCL"/>
</dbReference>
<dbReference type="GO" id="GO:0090090">
    <property type="term" value="P:negative regulation of canonical Wnt signaling pathway"/>
    <property type="evidence" value="ECO:0000314"/>
    <property type="project" value="BHF-UCL"/>
</dbReference>
<dbReference type="GO" id="GO:0030178">
    <property type="term" value="P:negative regulation of Wnt signaling pathway"/>
    <property type="evidence" value="ECO:0000318"/>
    <property type="project" value="GO_Central"/>
</dbReference>
<dbReference type="GO" id="GO:0032436">
    <property type="term" value="P:positive regulation of proteasomal ubiquitin-dependent protein catabolic process"/>
    <property type="evidence" value="ECO:0000315"/>
    <property type="project" value="BHF-UCL"/>
</dbReference>
<dbReference type="GO" id="GO:1903078">
    <property type="term" value="P:positive regulation of protein localization to plasma membrane"/>
    <property type="evidence" value="ECO:0000314"/>
    <property type="project" value="BHF-UCL"/>
</dbReference>
<dbReference type="GO" id="GO:0010954">
    <property type="term" value="P:positive regulation of protein processing"/>
    <property type="evidence" value="ECO:0000314"/>
    <property type="project" value="BHF-UCL"/>
</dbReference>
<dbReference type="GO" id="GO:0072659">
    <property type="term" value="P:protein localization to plasma membrane"/>
    <property type="evidence" value="ECO:0000315"/>
    <property type="project" value="BHF-UCL"/>
</dbReference>
<dbReference type="GO" id="GO:0016055">
    <property type="term" value="P:Wnt signaling pathway"/>
    <property type="evidence" value="ECO:0007669"/>
    <property type="project" value="UniProtKB-KW"/>
</dbReference>
<dbReference type="DisProt" id="DP00520"/>
<dbReference type="Gene3D" id="1.10.238.10">
    <property type="entry name" value="EF-hand"/>
    <property type="match status" value="1"/>
</dbReference>
<dbReference type="InterPro" id="IPR011992">
    <property type="entry name" value="EF-hand-dom_pair"/>
</dbReference>
<dbReference type="InterPro" id="IPR002048">
    <property type="entry name" value="EF_hand_dom"/>
</dbReference>
<dbReference type="InterPro" id="IPR040140">
    <property type="entry name" value="Nkd-like"/>
</dbReference>
<dbReference type="PANTHER" id="PTHR22611">
    <property type="entry name" value="PROTEIN NAKED CUTICLE"/>
    <property type="match status" value="1"/>
</dbReference>
<dbReference type="PANTHER" id="PTHR22611:SF1">
    <property type="entry name" value="PROTEIN NAKED CUTICLE HOMOLOG 2"/>
    <property type="match status" value="1"/>
</dbReference>
<dbReference type="SUPFAM" id="SSF47473">
    <property type="entry name" value="EF-hand"/>
    <property type="match status" value="1"/>
</dbReference>
<dbReference type="PROSITE" id="PS50222">
    <property type="entry name" value="EF_HAND_2"/>
    <property type="match status" value="1"/>
</dbReference>
<proteinExistence type="evidence at protein level"/>
<accession>Q969F2</accession>
<accession>Q96EK8</accession>
<accession>Q9BSN0</accession>
<name>NKD2_HUMAN</name>
<keyword id="KW-0025">Alternative splicing</keyword>
<keyword id="KW-0106">Calcium</keyword>
<keyword id="KW-1003">Cell membrane</keyword>
<keyword id="KW-0963">Cytoplasm</keyword>
<keyword id="KW-0968">Cytoplasmic vesicle</keyword>
<keyword id="KW-0268">Exocytosis</keyword>
<keyword id="KW-0449">Lipoprotein</keyword>
<keyword id="KW-0472">Membrane</keyword>
<keyword id="KW-0479">Metal-binding</keyword>
<keyword id="KW-0519">Myristate</keyword>
<keyword id="KW-1267">Proteomics identification</keyword>
<keyword id="KW-1185">Reference proteome</keyword>
<keyword id="KW-0813">Transport</keyword>
<keyword id="KW-0832">Ubl conjugation</keyword>
<keyword id="KW-0879">Wnt signaling pathway</keyword>